<comment type="function">
    <text evidence="1 7">Maintains chromatin CpG methylation that plays a role in genomic imprinting, regulation of embryogenesis and seed viability. Required for proper patterns of CG DNA methylation in dividing cells (By similarity). Required during the endosperm development in seeds.</text>
</comment>
<comment type="catalytic activity">
    <reaction evidence="5">
        <text>a 2'-deoxycytidine in DNA + S-adenosyl-L-methionine = a 5-methyl-2'-deoxycytidine in DNA + S-adenosyl-L-homocysteine + H(+)</text>
        <dbReference type="Rhea" id="RHEA:13681"/>
        <dbReference type="Rhea" id="RHEA-COMP:11369"/>
        <dbReference type="Rhea" id="RHEA-COMP:11370"/>
        <dbReference type="ChEBI" id="CHEBI:15378"/>
        <dbReference type="ChEBI" id="CHEBI:57856"/>
        <dbReference type="ChEBI" id="CHEBI:59789"/>
        <dbReference type="ChEBI" id="CHEBI:85452"/>
        <dbReference type="ChEBI" id="CHEBI:85454"/>
        <dbReference type="EC" id="2.1.1.37"/>
    </reaction>
</comment>
<comment type="subcellular location">
    <subcellularLocation>
        <location evidence="8">Nucleus</location>
    </subcellularLocation>
</comment>
<comment type="disruption phenotype">
    <text evidence="7">Endosperm development arrested.</text>
</comment>
<comment type="similarity">
    <text evidence="4">Belongs to the class I-like SAM-binding methyltransferase superfamily. C5-methyltransferase family.</text>
</comment>
<keyword id="KW-0156">Chromatin regulator</keyword>
<keyword id="KW-0238">DNA-binding</keyword>
<keyword id="KW-1017">Isopeptide bond</keyword>
<keyword id="KW-0489">Methyltransferase</keyword>
<keyword id="KW-0539">Nucleus</keyword>
<keyword id="KW-1185">Reference proteome</keyword>
<keyword id="KW-0677">Repeat</keyword>
<keyword id="KW-0949">S-adenosyl-L-methionine</keyword>
<keyword id="KW-0808">Transferase</keyword>
<keyword id="KW-0832">Ubl conjugation</keyword>
<proteinExistence type="inferred from homology"/>
<name>DNMT3_ARATH</name>
<organism>
    <name type="scientific">Arabidopsis thaliana</name>
    <name type="common">Mouse-ear cress</name>
    <dbReference type="NCBI Taxonomy" id="3702"/>
    <lineage>
        <taxon>Eukaryota</taxon>
        <taxon>Viridiplantae</taxon>
        <taxon>Streptophyta</taxon>
        <taxon>Embryophyta</taxon>
        <taxon>Tracheophyta</taxon>
        <taxon>Spermatophyta</taxon>
        <taxon>Magnoliopsida</taxon>
        <taxon>eudicotyledons</taxon>
        <taxon>Gunneridae</taxon>
        <taxon>Pentapetalae</taxon>
        <taxon>rosids</taxon>
        <taxon>malvids</taxon>
        <taxon>Brassicales</taxon>
        <taxon>Brassicaceae</taxon>
        <taxon>Camelineae</taxon>
        <taxon>Arabidopsis</taxon>
    </lineage>
</organism>
<sequence length="1404" mass="160212">MKTKAGKQKKRSVDSDDDVSRERRPKRATSGTNFKEKSLRFSEKYETVEAKKEQIVGDDEKEEKGVRFQSFGRVENWTISGYEDGSPVIWISTVIADYDCRKPSKKYKKLYDYFFEKACACVEVCKNLSTNPDTSLKELLAAVVRSMNGRKIFSSGGVIQEFVISQGEFIYNQLAGLDETSKNHETKFVDNRVLVSLRDESRKIHKAFSNVALRIDESKVLTSDQLMDGGEDEDLKYAKLLQEEEHMKSMDRSRNKRSSTTSAPNKFYIKINEDEIAHDYPLPSYYKNTKDETDELVLFNAGYAVDARNLPCRTLHNWALYNSDLMLISLEFLPMKPCADIDVTYLGQIKEWKIDFGEDMIFVLLRTDMAWYRLGKPSEQYAPWFEPILKTVRIGTSILALLKNETRMAKLSYTDVIKRLCGLEENDQAYISSTFFDVERYVIVHGQIILQFLTECPDEYIKRCPFVTGLASKMQDRHHTKWIIKKKRKMLQKGENLNLRRGKAPKVSKMKAMQATTTRLINRIWGEFYSIYSPEDPLEEIGAEEEFEEVEDVEEEDENEEEDTIQKAIEVQKADTLKKIRGSCKEMEIRWEGEILGETCAGEPLYGQALVGGRKMDVGGAVILEVDDQGETPLIYFVEYMFESSDNSKKLHGKLLQRGSETVLGTAANERELFLTNECLTVQLKDIKGTVSFEIRSRPWGHQYKKEHMAADKLDRARAEERKAKDLPIEYYCKSLYSPEKGGFFSLPRSDMGLGSGFCSSCKIRENEEERSKTKLNDSKTRFLSNGIKYSVGDFVYQIPNYLSKDRGKRRPVFKYGRNVGLRAFVVCQILDIVDLKEPKKGNTTSFEVKVRRFYRPDDVSAEEAYASDIQEVYYSEDTYILPPEAIKGKCEVMKKTDMPLCREYPILDHVYFCDRFYDSSNGCLKKLPYNMMLKFSTIKDDTLLREKKTETGSAMLLKPDEVPKGKRLATLDIFAGCGGLSYGLEKAGVSDTKWAIEYEEPAAQAFKQNHPKTTVFVDNCNVILRISWLRLLINDRAIMEKCGDVDDCISTTEAAELATKLDENQKSTLPLPGQVDFISGGPPCQGFSRLNRFSDGSWSKNQCQMILAFLSFADYFRPKYFLLENVKTFVSFNEGHTFHLTVASLLEMGYQVRFGLLEAGAYGISQPRKRAFIWAAAPNEVLPEWPEPMHVFNNPGFKIPLSQGLHYAAVQSTKFGAPFRSITVRDAIGDLPPIESGESKINKEEMRGSMTVLTDHICKKMNELNLIRCKKIPKTPGADWRDLPDEHVNLSNGIVKNIVPNLLNKAKDHNGYKGLYGRLDWHGNLPTCITNLQPMGLVGMCFHPDQDRIISVRECARSQGFPDSYKFSGNIKDKHRQVGNAVPPPLAFALGRKLKEALHLRNI</sequence>
<accession>Q9T0I1</accession>
<reference key="1">
    <citation type="journal article" date="1999" name="Nature">
        <title>Sequence and analysis of chromosome 4 of the plant Arabidopsis thaliana.</title>
        <authorList>
            <person name="Mayer K.F.X."/>
            <person name="Schueller C."/>
            <person name="Wambutt R."/>
            <person name="Murphy G."/>
            <person name="Volckaert G."/>
            <person name="Pohl T."/>
            <person name="Duesterhoeft A."/>
            <person name="Stiekema W."/>
            <person name="Entian K.-D."/>
            <person name="Terryn N."/>
            <person name="Harris B."/>
            <person name="Ansorge W."/>
            <person name="Brandt P."/>
            <person name="Grivell L.A."/>
            <person name="Rieger M."/>
            <person name="Weichselgartner M."/>
            <person name="de Simone V."/>
            <person name="Obermaier B."/>
            <person name="Mache R."/>
            <person name="Mueller M."/>
            <person name="Kreis M."/>
            <person name="Delseny M."/>
            <person name="Puigdomenech P."/>
            <person name="Watson M."/>
            <person name="Schmidtheini T."/>
            <person name="Reichert B."/>
            <person name="Portetelle D."/>
            <person name="Perez-Alonso M."/>
            <person name="Boutry M."/>
            <person name="Bancroft I."/>
            <person name="Vos P."/>
            <person name="Hoheisel J."/>
            <person name="Zimmermann W."/>
            <person name="Wedler H."/>
            <person name="Ridley P."/>
            <person name="Langham S.-A."/>
            <person name="McCullagh B."/>
            <person name="Bilham L."/>
            <person name="Robben J."/>
            <person name="van der Schueren J."/>
            <person name="Grymonprez B."/>
            <person name="Chuang Y.-J."/>
            <person name="Vandenbussche F."/>
            <person name="Braeken M."/>
            <person name="Weltjens I."/>
            <person name="Voet M."/>
            <person name="Bastiaens I."/>
            <person name="Aert R."/>
            <person name="Defoor E."/>
            <person name="Weitzenegger T."/>
            <person name="Bothe G."/>
            <person name="Ramsperger U."/>
            <person name="Hilbert H."/>
            <person name="Braun M."/>
            <person name="Holzer E."/>
            <person name="Brandt A."/>
            <person name="Peters S."/>
            <person name="van Staveren M."/>
            <person name="Dirkse W."/>
            <person name="Mooijman P."/>
            <person name="Klein Lankhorst R."/>
            <person name="Rose M."/>
            <person name="Hauf J."/>
            <person name="Koetter P."/>
            <person name="Berneiser S."/>
            <person name="Hempel S."/>
            <person name="Feldpausch M."/>
            <person name="Lamberth S."/>
            <person name="Van den Daele H."/>
            <person name="De Keyser A."/>
            <person name="Buysshaert C."/>
            <person name="Gielen J."/>
            <person name="Villarroel R."/>
            <person name="De Clercq R."/>
            <person name="van Montagu M."/>
            <person name="Rogers J."/>
            <person name="Cronin A."/>
            <person name="Quail M.A."/>
            <person name="Bray-Allen S."/>
            <person name="Clark L."/>
            <person name="Doggett J."/>
            <person name="Hall S."/>
            <person name="Kay M."/>
            <person name="Lennard N."/>
            <person name="McLay K."/>
            <person name="Mayes R."/>
            <person name="Pettett A."/>
            <person name="Rajandream M.A."/>
            <person name="Lyne M."/>
            <person name="Benes V."/>
            <person name="Rechmann S."/>
            <person name="Borkova D."/>
            <person name="Bloecker H."/>
            <person name="Scharfe M."/>
            <person name="Grimm M."/>
            <person name="Loehnert T.-H."/>
            <person name="Dose S."/>
            <person name="de Haan M."/>
            <person name="Maarse A.C."/>
            <person name="Schaefer M."/>
            <person name="Mueller-Auer S."/>
            <person name="Gabel C."/>
            <person name="Fuchs M."/>
            <person name="Fartmann B."/>
            <person name="Granderath K."/>
            <person name="Dauner D."/>
            <person name="Herzl A."/>
            <person name="Neumann S."/>
            <person name="Argiriou A."/>
            <person name="Vitale D."/>
            <person name="Liguori R."/>
            <person name="Piravandi E."/>
            <person name="Massenet O."/>
            <person name="Quigley F."/>
            <person name="Clabauld G."/>
            <person name="Muendlein A."/>
            <person name="Felber R."/>
            <person name="Schnabl S."/>
            <person name="Hiller R."/>
            <person name="Schmidt W."/>
            <person name="Lecharny A."/>
            <person name="Aubourg S."/>
            <person name="Chefdor F."/>
            <person name="Cooke R."/>
            <person name="Berger C."/>
            <person name="Monfort A."/>
            <person name="Casacuberta E."/>
            <person name="Gibbons T."/>
            <person name="Weber N."/>
            <person name="Vandenbol M."/>
            <person name="Bargues M."/>
            <person name="Terol J."/>
            <person name="Torres A."/>
            <person name="Perez-Perez A."/>
            <person name="Purnelle B."/>
            <person name="Bent E."/>
            <person name="Johnson S."/>
            <person name="Tacon D."/>
            <person name="Jesse T."/>
            <person name="Heijnen L."/>
            <person name="Schwarz S."/>
            <person name="Scholler P."/>
            <person name="Heber S."/>
            <person name="Francs P."/>
            <person name="Bielke C."/>
            <person name="Frishman D."/>
            <person name="Haase D."/>
            <person name="Lemcke K."/>
            <person name="Mewes H.-W."/>
            <person name="Stocker S."/>
            <person name="Zaccaria P."/>
            <person name="Bevan M."/>
            <person name="Wilson R.K."/>
            <person name="de la Bastide M."/>
            <person name="Habermann K."/>
            <person name="Parnell L."/>
            <person name="Dedhia N."/>
            <person name="Gnoj L."/>
            <person name="Schutz K."/>
            <person name="Huang E."/>
            <person name="Spiegel L."/>
            <person name="Sekhon M."/>
            <person name="Murray J."/>
            <person name="Sheet P."/>
            <person name="Cordes M."/>
            <person name="Abu-Threideh J."/>
            <person name="Stoneking T."/>
            <person name="Kalicki J."/>
            <person name="Graves T."/>
            <person name="Harmon G."/>
            <person name="Edwards J."/>
            <person name="Latreille P."/>
            <person name="Courtney L."/>
            <person name="Cloud J."/>
            <person name="Abbott A."/>
            <person name="Scott K."/>
            <person name="Johnson D."/>
            <person name="Minx P."/>
            <person name="Bentley D."/>
            <person name="Fulton B."/>
            <person name="Miller N."/>
            <person name="Greco T."/>
            <person name="Kemp K."/>
            <person name="Kramer J."/>
            <person name="Fulton L."/>
            <person name="Mardis E."/>
            <person name="Dante M."/>
            <person name="Pepin K."/>
            <person name="Hillier L.W."/>
            <person name="Nelson J."/>
            <person name="Spieth J."/>
            <person name="Ryan E."/>
            <person name="Andrews S."/>
            <person name="Geisel C."/>
            <person name="Layman D."/>
            <person name="Du H."/>
            <person name="Ali J."/>
            <person name="Berghoff A."/>
            <person name="Jones K."/>
            <person name="Drone K."/>
            <person name="Cotton M."/>
            <person name="Joshu C."/>
            <person name="Antonoiu B."/>
            <person name="Zidanic M."/>
            <person name="Strong C."/>
            <person name="Sun H."/>
            <person name="Lamar B."/>
            <person name="Yordan C."/>
            <person name="Ma P."/>
            <person name="Zhong J."/>
            <person name="Preston R."/>
            <person name="Vil D."/>
            <person name="Shekher M."/>
            <person name="Matero A."/>
            <person name="Shah R."/>
            <person name="Swaby I.K."/>
            <person name="O'Shaughnessy A."/>
            <person name="Rodriguez M."/>
            <person name="Hoffman J."/>
            <person name="Till S."/>
            <person name="Granat S."/>
            <person name="Shohdy N."/>
            <person name="Hasegawa A."/>
            <person name="Hameed A."/>
            <person name="Lodhi M."/>
            <person name="Johnson A."/>
            <person name="Chen E."/>
            <person name="Marra M.A."/>
            <person name="Martienssen R."/>
            <person name="McCombie W.R."/>
        </authorList>
    </citation>
    <scope>NUCLEOTIDE SEQUENCE [LARGE SCALE GENOMIC DNA]</scope>
    <source>
        <strain>cv. Columbia</strain>
    </source>
</reference>
<reference key="2">
    <citation type="journal article" date="2017" name="Plant J.">
        <title>Araport11: a complete reannotation of the Arabidopsis thaliana reference genome.</title>
        <authorList>
            <person name="Cheng C.Y."/>
            <person name="Krishnakumar V."/>
            <person name="Chan A.P."/>
            <person name="Thibaud-Nissen F."/>
            <person name="Schobel S."/>
            <person name="Town C.D."/>
        </authorList>
    </citation>
    <scope>GENOME REANNOTATION</scope>
    <source>
        <strain>cv. Columbia</strain>
    </source>
</reference>
<reference key="3">
    <citation type="journal article" date="1999" name="Plant Mol. Biol.">
        <title>Multiple DNA methyltransferase genes in Arabidopsis thaliana.</title>
        <authorList>
            <person name="Genger R.K."/>
            <person name="Kovac K.A."/>
            <person name="Dennis E.S."/>
            <person name="Peacock W.J."/>
            <person name="Finnegan E.J."/>
        </authorList>
    </citation>
    <scope>GENE FAMILY</scope>
    <source>
        <strain>cv. Columbia</strain>
    </source>
</reference>
<reference key="4">
    <citation type="journal article" date="2005" name="Development">
        <title>Genetic and molecular identification of genes required for female gametophyte development and function in Arabidopsis.</title>
        <authorList>
            <person name="Pagnussat G.C."/>
            <person name="Yu H.-J."/>
            <person name="Ngo Q.A."/>
            <person name="Rajani S."/>
            <person name="Mayalagu S."/>
            <person name="Johnson C.S."/>
            <person name="Capron A."/>
            <person name="Xie L.-F."/>
            <person name="Ye D."/>
            <person name="Sundaresan V."/>
        </authorList>
    </citation>
    <scope>FUNCTION</scope>
    <scope>DISRUPTION PHENOTYPE</scope>
</reference>
<reference key="5">
    <citation type="journal article" date="2011" name="Proc. Natl. Acad. Sci. U.S.A.">
        <title>Regulation of imprinted gene expression in Arabidopsis endosperm.</title>
        <authorList>
            <person name="Hsieh T.-F."/>
            <person name="Shin J."/>
            <person name="Uzawa R."/>
            <person name="Silva P."/>
            <person name="Cohen S."/>
            <person name="Bauer M.J."/>
            <person name="Hashimoto M."/>
            <person name="Kirkbride R.C."/>
            <person name="Harada J.J."/>
            <person name="Zilberman D."/>
            <person name="Fischer R.L."/>
        </authorList>
    </citation>
    <scope>GENE FAMILY</scope>
    <scope>NOMENCLATURE</scope>
</reference>
<protein>
    <recommendedName>
        <fullName>DNA (cytosine-5)-methyltransferase 3</fullName>
        <ecNumber>2.1.1.37</ecNumber>
    </recommendedName>
    <alternativeName>
        <fullName>DNA methyltransferase 3</fullName>
    </alternativeName>
    <alternativeName>
        <fullName>DNA methyltransferase III</fullName>
    </alternativeName>
    <alternativeName>
        <fullName>Protein MATERNAL EFFECT EMBRYO ARREST 57</fullName>
    </alternativeName>
</protein>
<gene>
    <name type="primary">MET3</name>
    <name type="synonym">MEE57</name>
    <name type="synonym">METIII</name>
    <name type="ordered locus">At4g13610</name>
    <name type="ORF">T6G15.160</name>
</gene>
<dbReference type="EC" id="2.1.1.37"/>
<dbReference type="EMBL" id="AL049656">
    <property type="protein sequence ID" value="CAB41119.1"/>
    <property type="molecule type" value="Genomic_DNA"/>
</dbReference>
<dbReference type="EMBL" id="AL161537">
    <property type="protein sequence ID" value="CAB78403.1"/>
    <property type="molecule type" value="Genomic_DNA"/>
</dbReference>
<dbReference type="EMBL" id="CP002687">
    <property type="protein sequence ID" value="AEE83302.1"/>
    <property type="molecule type" value="Genomic_DNA"/>
</dbReference>
<dbReference type="PIR" id="T06663">
    <property type="entry name" value="T06663"/>
</dbReference>
<dbReference type="RefSeq" id="NP_193097.1">
    <property type="nucleotide sequence ID" value="NM_117435.1"/>
</dbReference>
<dbReference type="SMR" id="Q9T0I1"/>
<dbReference type="FunCoup" id="Q9T0I1">
    <property type="interactions" value="2008"/>
</dbReference>
<dbReference type="STRING" id="3702.Q9T0I1"/>
<dbReference type="REBASE" id="2839">
    <property type="entry name" value="M.AthMET2"/>
</dbReference>
<dbReference type="PaxDb" id="3702-AT4G13610.1"/>
<dbReference type="EnsemblPlants" id="AT4G13610.1">
    <property type="protein sequence ID" value="AT4G13610.1"/>
    <property type="gene ID" value="AT4G13610"/>
</dbReference>
<dbReference type="GeneID" id="826994"/>
<dbReference type="Gramene" id="AT4G13610.1">
    <property type="protein sequence ID" value="AT4G13610.1"/>
    <property type="gene ID" value="AT4G13610"/>
</dbReference>
<dbReference type="KEGG" id="ath:AT4G13610"/>
<dbReference type="Araport" id="AT4G13610"/>
<dbReference type="TAIR" id="AT4G13610">
    <property type="gene designation" value="MEE57"/>
</dbReference>
<dbReference type="eggNOG" id="ENOG502QPKK">
    <property type="taxonomic scope" value="Eukaryota"/>
</dbReference>
<dbReference type="HOGENOM" id="CLU_002247_0_0_1"/>
<dbReference type="InParanoid" id="Q9T0I1"/>
<dbReference type="OMA" id="RIENWAI"/>
<dbReference type="PhylomeDB" id="Q9T0I1"/>
<dbReference type="PRO" id="PR:Q9T0I1"/>
<dbReference type="Proteomes" id="UP000006548">
    <property type="component" value="Chromosome 4"/>
</dbReference>
<dbReference type="ExpressionAtlas" id="Q9T0I1">
    <property type="expression patterns" value="baseline and differential"/>
</dbReference>
<dbReference type="GO" id="GO:0005634">
    <property type="term" value="C:nucleus"/>
    <property type="evidence" value="ECO:0007669"/>
    <property type="project" value="UniProtKB-SubCell"/>
</dbReference>
<dbReference type="GO" id="GO:0003682">
    <property type="term" value="F:chromatin binding"/>
    <property type="evidence" value="ECO:0007669"/>
    <property type="project" value="InterPro"/>
</dbReference>
<dbReference type="GO" id="GO:0003886">
    <property type="term" value="F:DNA (cytosine-5-)-methyltransferase activity"/>
    <property type="evidence" value="ECO:0007669"/>
    <property type="project" value="UniProtKB-EC"/>
</dbReference>
<dbReference type="GO" id="GO:0003677">
    <property type="term" value="F:DNA binding"/>
    <property type="evidence" value="ECO:0007669"/>
    <property type="project" value="UniProtKB-KW"/>
</dbReference>
<dbReference type="GO" id="GO:0006346">
    <property type="term" value="P:DNA methylation-dependent constitutive heterochromatin formation"/>
    <property type="evidence" value="ECO:0007669"/>
    <property type="project" value="InterPro"/>
</dbReference>
<dbReference type="GO" id="GO:0009793">
    <property type="term" value="P:embryo development ending in seed dormancy"/>
    <property type="evidence" value="ECO:0000315"/>
    <property type="project" value="TAIR"/>
</dbReference>
<dbReference type="GO" id="GO:0032259">
    <property type="term" value="P:methylation"/>
    <property type="evidence" value="ECO:0007669"/>
    <property type="project" value="UniProtKB-KW"/>
</dbReference>
<dbReference type="CDD" id="cd04712">
    <property type="entry name" value="BAH_DCM_I"/>
    <property type="match status" value="1"/>
</dbReference>
<dbReference type="CDD" id="cd04708">
    <property type="entry name" value="BAH_plantDCM_II"/>
    <property type="match status" value="1"/>
</dbReference>
<dbReference type="FunFam" id="3.40.50.150:FF:000108">
    <property type="entry name" value="DNA (cytosine-5)-methyltransferase"/>
    <property type="match status" value="1"/>
</dbReference>
<dbReference type="FunFam" id="3.40.50.150:FF:000128">
    <property type="entry name" value="DNA (cytosine-5)-methyltransferase"/>
    <property type="match status" value="1"/>
</dbReference>
<dbReference type="FunFam" id="2.30.30.490:FF:000046">
    <property type="entry name" value="DNA (cytosine-5)-methyltransferase 3"/>
    <property type="match status" value="1"/>
</dbReference>
<dbReference type="Gene3D" id="2.30.30.490">
    <property type="match status" value="2"/>
</dbReference>
<dbReference type="Gene3D" id="3.90.120.10">
    <property type="entry name" value="DNA Methylase, subunit A, domain 2"/>
    <property type="match status" value="2"/>
</dbReference>
<dbReference type="Gene3D" id="3.40.50.150">
    <property type="entry name" value="Vaccinia Virus protein VP39"/>
    <property type="match status" value="1"/>
</dbReference>
<dbReference type="InterPro" id="IPR001025">
    <property type="entry name" value="BAH_dom"/>
</dbReference>
<dbReference type="InterPro" id="IPR043151">
    <property type="entry name" value="BAH_sf"/>
</dbReference>
<dbReference type="InterPro" id="IPR050390">
    <property type="entry name" value="C5-Methyltransferase"/>
</dbReference>
<dbReference type="InterPro" id="IPR018117">
    <property type="entry name" value="C5_DNA_meth_AS"/>
</dbReference>
<dbReference type="InterPro" id="IPR001525">
    <property type="entry name" value="C5_MeTfrase"/>
</dbReference>
<dbReference type="InterPro" id="IPR031303">
    <property type="entry name" value="C5_meth_CS"/>
</dbReference>
<dbReference type="InterPro" id="IPR022702">
    <property type="entry name" value="Cytosine_MeTrfase1_RFD"/>
</dbReference>
<dbReference type="InterPro" id="IPR017198">
    <property type="entry name" value="DNMT1-like"/>
</dbReference>
<dbReference type="InterPro" id="IPR029063">
    <property type="entry name" value="SAM-dependent_MTases_sf"/>
</dbReference>
<dbReference type="NCBIfam" id="TIGR00675">
    <property type="entry name" value="dcm"/>
    <property type="match status" value="1"/>
</dbReference>
<dbReference type="PANTHER" id="PTHR10629">
    <property type="entry name" value="CYTOSINE-SPECIFIC METHYLTRANSFERASE"/>
    <property type="match status" value="1"/>
</dbReference>
<dbReference type="PANTHER" id="PTHR10629:SF52">
    <property type="entry name" value="DNA (CYTOSINE-5)-METHYLTRANSFERASE 1"/>
    <property type="match status" value="1"/>
</dbReference>
<dbReference type="Pfam" id="PF01426">
    <property type="entry name" value="BAH"/>
    <property type="match status" value="2"/>
</dbReference>
<dbReference type="Pfam" id="PF00145">
    <property type="entry name" value="DNA_methylase"/>
    <property type="match status" value="2"/>
</dbReference>
<dbReference type="Pfam" id="PF12047">
    <property type="entry name" value="DNMT1-RFD"/>
    <property type="match status" value="2"/>
</dbReference>
<dbReference type="PIRSF" id="PIRSF037404">
    <property type="entry name" value="DNMT1"/>
    <property type="match status" value="1"/>
</dbReference>
<dbReference type="PRINTS" id="PR00105">
    <property type="entry name" value="C5METTRFRASE"/>
</dbReference>
<dbReference type="SMART" id="SM00439">
    <property type="entry name" value="BAH"/>
    <property type="match status" value="2"/>
</dbReference>
<dbReference type="SUPFAM" id="SSF53335">
    <property type="entry name" value="S-adenosyl-L-methionine-dependent methyltransferases"/>
    <property type="match status" value="1"/>
</dbReference>
<dbReference type="PROSITE" id="PS51038">
    <property type="entry name" value="BAH"/>
    <property type="match status" value="2"/>
</dbReference>
<dbReference type="PROSITE" id="PS00094">
    <property type="entry name" value="C5_MTASE_1"/>
    <property type="match status" value="1"/>
</dbReference>
<dbReference type="PROSITE" id="PS00095">
    <property type="entry name" value="C5_MTASE_2"/>
    <property type="match status" value="1"/>
</dbReference>
<dbReference type="PROSITE" id="PS51679">
    <property type="entry name" value="SAM_MT_C5"/>
    <property type="match status" value="1"/>
</dbReference>
<evidence type="ECO:0000250" key="1"/>
<evidence type="ECO:0000250" key="2">
    <source>
        <dbReference type="UniProtKB" id="O23273"/>
    </source>
</evidence>
<evidence type="ECO:0000255" key="3">
    <source>
        <dbReference type="PROSITE-ProRule" id="PRU00370"/>
    </source>
</evidence>
<evidence type="ECO:0000255" key="4">
    <source>
        <dbReference type="PROSITE-ProRule" id="PRU01016"/>
    </source>
</evidence>
<evidence type="ECO:0000255" key="5">
    <source>
        <dbReference type="PROSITE-ProRule" id="PRU10018"/>
    </source>
</evidence>
<evidence type="ECO:0000256" key="6">
    <source>
        <dbReference type="SAM" id="MobiDB-lite"/>
    </source>
</evidence>
<evidence type="ECO:0000269" key="7">
    <source>
    </source>
</evidence>
<evidence type="ECO:0000305" key="8"/>
<feature type="chain" id="PRO_0000430012" description="DNA (cytosine-5)-methyltransferase 3">
    <location>
        <begin position="1"/>
        <end position="1404"/>
    </location>
</feature>
<feature type="domain" description="BAH 1" evidence="3">
    <location>
        <begin position="614"/>
        <end position="748"/>
    </location>
</feature>
<feature type="domain" description="BAH 2" evidence="3">
    <location>
        <begin position="788"/>
        <end position="929"/>
    </location>
</feature>
<feature type="domain" description="SAM-dependent MTase C5-type" evidence="4">
    <location>
        <begin position="969"/>
        <end position="1402"/>
    </location>
</feature>
<feature type="region of interest" description="Disordered" evidence="6">
    <location>
        <begin position="1"/>
        <end position="35"/>
    </location>
</feature>
<feature type="compositionally biased region" description="Basic residues" evidence="6">
    <location>
        <begin position="1"/>
        <end position="10"/>
    </location>
</feature>
<feature type="compositionally biased region" description="Basic and acidic residues" evidence="6">
    <location>
        <begin position="11"/>
        <end position="22"/>
    </location>
</feature>
<feature type="active site" evidence="4 5">
    <location>
        <position position="1085"/>
    </location>
</feature>
<feature type="cross-link" description="Glycyl lysine isopeptide (Lys-Gly) (interchain with G-Cter in ubiquitin)" evidence="2">
    <location>
        <position position="486"/>
    </location>
</feature>